<feature type="chain" id="PRO_1000124946" description="Nucleoside diphosphate kinase">
    <location>
        <begin position="1"/>
        <end position="141"/>
    </location>
</feature>
<feature type="active site" description="Pros-phosphohistidine intermediate" evidence="1">
    <location>
        <position position="115"/>
    </location>
</feature>
<feature type="binding site" evidence="1">
    <location>
        <position position="9"/>
    </location>
    <ligand>
        <name>ATP</name>
        <dbReference type="ChEBI" id="CHEBI:30616"/>
    </ligand>
</feature>
<feature type="binding site" evidence="1">
    <location>
        <position position="57"/>
    </location>
    <ligand>
        <name>ATP</name>
        <dbReference type="ChEBI" id="CHEBI:30616"/>
    </ligand>
</feature>
<feature type="binding site" evidence="1">
    <location>
        <position position="85"/>
    </location>
    <ligand>
        <name>ATP</name>
        <dbReference type="ChEBI" id="CHEBI:30616"/>
    </ligand>
</feature>
<feature type="binding site" evidence="1">
    <location>
        <position position="91"/>
    </location>
    <ligand>
        <name>ATP</name>
        <dbReference type="ChEBI" id="CHEBI:30616"/>
    </ligand>
</feature>
<feature type="binding site" evidence="1">
    <location>
        <position position="102"/>
    </location>
    <ligand>
        <name>ATP</name>
        <dbReference type="ChEBI" id="CHEBI:30616"/>
    </ligand>
</feature>
<feature type="binding site" evidence="1">
    <location>
        <position position="112"/>
    </location>
    <ligand>
        <name>ATP</name>
        <dbReference type="ChEBI" id="CHEBI:30616"/>
    </ligand>
</feature>
<proteinExistence type="inferred from homology"/>
<gene>
    <name evidence="1" type="primary">ndk</name>
    <name type="ordered locus">CTL0762</name>
</gene>
<dbReference type="EC" id="2.7.4.6" evidence="1"/>
<dbReference type="EMBL" id="AM884176">
    <property type="protein sequence ID" value="CAP04200.1"/>
    <property type="molecule type" value="Genomic_DNA"/>
</dbReference>
<dbReference type="RefSeq" id="WP_009873861.1">
    <property type="nucleotide sequence ID" value="NC_010287.1"/>
</dbReference>
<dbReference type="RefSeq" id="YP_001654833.1">
    <property type="nucleotide sequence ID" value="NC_010287.1"/>
</dbReference>
<dbReference type="SMR" id="B0B874"/>
<dbReference type="KEGG" id="ctb:CTL0762"/>
<dbReference type="PATRIC" id="fig|471472.4.peg.818"/>
<dbReference type="HOGENOM" id="CLU_060216_8_1_0"/>
<dbReference type="Proteomes" id="UP001154402">
    <property type="component" value="Chromosome"/>
</dbReference>
<dbReference type="GO" id="GO:0005737">
    <property type="term" value="C:cytoplasm"/>
    <property type="evidence" value="ECO:0007669"/>
    <property type="project" value="UniProtKB-SubCell"/>
</dbReference>
<dbReference type="GO" id="GO:0005524">
    <property type="term" value="F:ATP binding"/>
    <property type="evidence" value="ECO:0007669"/>
    <property type="project" value="UniProtKB-UniRule"/>
</dbReference>
<dbReference type="GO" id="GO:0046872">
    <property type="term" value="F:metal ion binding"/>
    <property type="evidence" value="ECO:0007669"/>
    <property type="project" value="UniProtKB-KW"/>
</dbReference>
<dbReference type="GO" id="GO:0004550">
    <property type="term" value="F:nucleoside diphosphate kinase activity"/>
    <property type="evidence" value="ECO:0007669"/>
    <property type="project" value="UniProtKB-UniRule"/>
</dbReference>
<dbReference type="GO" id="GO:0006241">
    <property type="term" value="P:CTP biosynthetic process"/>
    <property type="evidence" value="ECO:0007669"/>
    <property type="project" value="UniProtKB-UniRule"/>
</dbReference>
<dbReference type="GO" id="GO:0006183">
    <property type="term" value="P:GTP biosynthetic process"/>
    <property type="evidence" value="ECO:0007669"/>
    <property type="project" value="UniProtKB-UniRule"/>
</dbReference>
<dbReference type="GO" id="GO:0006228">
    <property type="term" value="P:UTP biosynthetic process"/>
    <property type="evidence" value="ECO:0007669"/>
    <property type="project" value="UniProtKB-UniRule"/>
</dbReference>
<dbReference type="CDD" id="cd04413">
    <property type="entry name" value="NDPk_I"/>
    <property type="match status" value="1"/>
</dbReference>
<dbReference type="FunFam" id="3.30.70.141:FF:000001">
    <property type="entry name" value="Nucleoside diphosphate kinase"/>
    <property type="match status" value="1"/>
</dbReference>
<dbReference type="Gene3D" id="3.30.70.141">
    <property type="entry name" value="Nucleoside diphosphate kinase-like domain"/>
    <property type="match status" value="1"/>
</dbReference>
<dbReference type="HAMAP" id="MF_00451">
    <property type="entry name" value="NDP_kinase"/>
    <property type="match status" value="1"/>
</dbReference>
<dbReference type="InterPro" id="IPR034907">
    <property type="entry name" value="NDK-like_dom"/>
</dbReference>
<dbReference type="InterPro" id="IPR036850">
    <property type="entry name" value="NDK-like_dom_sf"/>
</dbReference>
<dbReference type="InterPro" id="IPR001564">
    <property type="entry name" value="Nucleoside_diP_kinase"/>
</dbReference>
<dbReference type="InterPro" id="IPR023005">
    <property type="entry name" value="Nucleoside_diP_kinase_AS"/>
</dbReference>
<dbReference type="NCBIfam" id="NF001908">
    <property type="entry name" value="PRK00668.1"/>
    <property type="match status" value="1"/>
</dbReference>
<dbReference type="PANTHER" id="PTHR46161">
    <property type="entry name" value="NUCLEOSIDE DIPHOSPHATE KINASE"/>
    <property type="match status" value="1"/>
</dbReference>
<dbReference type="PANTHER" id="PTHR46161:SF3">
    <property type="entry name" value="NUCLEOSIDE DIPHOSPHATE KINASE DDB_G0292928-RELATED"/>
    <property type="match status" value="1"/>
</dbReference>
<dbReference type="Pfam" id="PF00334">
    <property type="entry name" value="NDK"/>
    <property type="match status" value="1"/>
</dbReference>
<dbReference type="PRINTS" id="PR01243">
    <property type="entry name" value="NUCDPKINASE"/>
</dbReference>
<dbReference type="SMART" id="SM00562">
    <property type="entry name" value="NDK"/>
    <property type="match status" value="1"/>
</dbReference>
<dbReference type="SUPFAM" id="SSF54919">
    <property type="entry name" value="Nucleoside diphosphate kinase, NDK"/>
    <property type="match status" value="1"/>
</dbReference>
<dbReference type="PROSITE" id="PS00469">
    <property type="entry name" value="NDPK"/>
    <property type="match status" value="1"/>
</dbReference>
<dbReference type="PROSITE" id="PS51374">
    <property type="entry name" value="NDPK_LIKE"/>
    <property type="match status" value="1"/>
</dbReference>
<sequence length="141" mass="15265">MEQTLSIIKPDSVGKAHIGEIIAIFEKSGLRIAAMKMVHLSVKEAEGFYVVHKERPFFQELVDFMISGPVVVMVLQGENAVARNRELMGATNPKEAAEGSIRALFGESIGVNAVHGSDSLENAAIEVSYFFAKTEVVNSVA</sequence>
<protein>
    <recommendedName>
        <fullName evidence="1">Nucleoside diphosphate kinase</fullName>
        <shortName evidence="1">NDK</shortName>
        <shortName evidence="1">NDP kinase</shortName>
        <ecNumber evidence="1">2.7.4.6</ecNumber>
    </recommendedName>
    <alternativeName>
        <fullName evidence="1">Nucleoside-2-P kinase</fullName>
    </alternativeName>
</protein>
<reference key="1">
    <citation type="journal article" date="2008" name="Genome Res.">
        <title>Chlamydia trachomatis: genome sequence analysis of lymphogranuloma venereum isolates.</title>
        <authorList>
            <person name="Thomson N.R."/>
            <person name="Holden M.T.G."/>
            <person name="Carder C."/>
            <person name="Lennard N."/>
            <person name="Lockey S.J."/>
            <person name="Marsh P."/>
            <person name="Skipp P."/>
            <person name="O'Connor C.D."/>
            <person name="Goodhead I."/>
            <person name="Norbertzcak H."/>
            <person name="Harris B."/>
            <person name="Ormond D."/>
            <person name="Rance R."/>
            <person name="Quail M.A."/>
            <person name="Parkhill J."/>
            <person name="Stephens R.S."/>
            <person name="Clarke I.N."/>
        </authorList>
    </citation>
    <scope>NUCLEOTIDE SEQUENCE [LARGE SCALE GENOMIC DNA]</scope>
    <source>
        <strain>ATCC VR-902B / DSM 19102 / 434/Bu</strain>
    </source>
</reference>
<accession>B0B874</accession>
<keyword id="KW-0067">ATP-binding</keyword>
<keyword id="KW-0963">Cytoplasm</keyword>
<keyword id="KW-0418">Kinase</keyword>
<keyword id="KW-0460">Magnesium</keyword>
<keyword id="KW-0479">Metal-binding</keyword>
<keyword id="KW-0546">Nucleotide metabolism</keyword>
<keyword id="KW-0547">Nucleotide-binding</keyword>
<keyword id="KW-0597">Phosphoprotein</keyword>
<keyword id="KW-0808">Transferase</keyword>
<name>NDK_CHLT2</name>
<comment type="function">
    <text evidence="1">Major role in the synthesis of nucleoside triphosphates other than ATP. The ATP gamma phosphate is transferred to the NDP beta phosphate via a ping-pong mechanism, using a phosphorylated active-site intermediate.</text>
</comment>
<comment type="catalytic activity">
    <reaction evidence="1">
        <text>a 2'-deoxyribonucleoside 5'-diphosphate + ATP = a 2'-deoxyribonucleoside 5'-triphosphate + ADP</text>
        <dbReference type="Rhea" id="RHEA:44640"/>
        <dbReference type="ChEBI" id="CHEBI:30616"/>
        <dbReference type="ChEBI" id="CHEBI:61560"/>
        <dbReference type="ChEBI" id="CHEBI:73316"/>
        <dbReference type="ChEBI" id="CHEBI:456216"/>
        <dbReference type="EC" id="2.7.4.6"/>
    </reaction>
</comment>
<comment type="catalytic activity">
    <reaction evidence="1">
        <text>a ribonucleoside 5'-diphosphate + ATP = a ribonucleoside 5'-triphosphate + ADP</text>
        <dbReference type="Rhea" id="RHEA:18113"/>
        <dbReference type="ChEBI" id="CHEBI:30616"/>
        <dbReference type="ChEBI" id="CHEBI:57930"/>
        <dbReference type="ChEBI" id="CHEBI:61557"/>
        <dbReference type="ChEBI" id="CHEBI:456216"/>
        <dbReference type="EC" id="2.7.4.6"/>
    </reaction>
</comment>
<comment type="cofactor">
    <cofactor evidence="1">
        <name>Mg(2+)</name>
        <dbReference type="ChEBI" id="CHEBI:18420"/>
    </cofactor>
</comment>
<comment type="subunit">
    <text evidence="1">Homotetramer.</text>
</comment>
<comment type="subcellular location">
    <subcellularLocation>
        <location evidence="1">Cytoplasm</location>
    </subcellularLocation>
</comment>
<comment type="similarity">
    <text evidence="1">Belongs to the NDK family.</text>
</comment>
<organism>
    <name type="scientific">Chlamydia trachomatis serovar L2 (strain ATCC VR-902B / DSM 19102 / 434/Bu)</name>
    <dbReference type="NCBI Taxonomy" id="471472"/>
    <lineage>
        <taxon>Bacteria</taxon>
        <taxon>Pseudomonadati</taxon>
        <taxon>Chlamydiota</taxon>
        <taxon>Chlamydiia</taxon>
        <taxon>Chlamydiales</taxon>
        <taxon>Chlamydiaceae</taxon>
        <taxon>Chlamydia/Chlamydophila group</taxon>
        <taxon>Chlamydia</taxon>
    </lineage>
</organism>
<evidence type="ECO:0000255" key="1">
    <source>
        <dbReference type="HAMAP-Rule" id="MF_00451"/>
    </source>
</evidence>